<sequence length="262" mass="28117">MIDKTAFIHPSSIVEEGAIIGAGVYIGPFCIVGSQVEIGAGTELKSHVVVNGITKIGCDNQIYQFASIGEANQDLKYAGEPTRVEVGDRNRIRESVTIHRGTTQGGGVTKVGCDNLLMVNTHVAHDCVIGNRCILANNAALGGHVEIDDYAIIGGMTAIHQFCVIGAHVMVGGCSGITQDVPPFVIAQGNHATPFGINIEGLKRRGFDKESLHAIRSAYKLLYRSGRTLDEVKPEIAELAEQYPVVKAFNDFFARSTRGIIR</sequence>
<accession>A4TL79</accession>
<reference key="1">
    <citation type="submission" date="2007-02" db="EMBL/GenBank/DDBJ databases">
        <title>Complete sequence of chromosome of Yersinia pestis Pestoides F.</title>
        <authorList>
            <consortium name="US DOE Joint Genome Institute"/>
            <person name="Copeland A."/>
            <person name="Lucas S."/>
            <person name="Lapidus A."/>
            <person name="Barry K."/>
            <person name="Detter J.C."/>
            <person name="Glavina del Rio T."/>
            <person name="Hammon N."/>
            <person name="Israni S."/>
            <person name="Dalin E."/>
            <person name="Tice H."/>
            <person name="Pitluck S."/>
            <person name="Di Bartolo G."/>
            <person name="Chain P."/>
            <person name="Malfatti S."/>
            <person name="Shin M."/>
            <person name="Vergez L."/>
            <person name="Schmutz J."/>
            <person name="Larimer F."/>
            <person name="Land M."/>
            <person name="Hauser L."/>
            <person name="Worsham P."/>
            <person name="Chu M."/>
            <person name="Bearden S."/>
            <person name="Garcia E."/>
            <person name="Richardson P."/>
        </authorList>
    </citation>
    <scope>NUCLEOTIDE SEQUENCE [LARGE SCALE GENOMIC DNA]</scope>
    <source>
        <strain>Pestoides F</strain>
    </source>
</reference>
<evidence type="ECO:0000255" key="1">
    <source>
        <dbReference type="HAMAP-Rule" id="MF_00387"/>
    </source>
</evidence>
<organism>
    <name type="scientific">Yersinia pestis (strain Pestoides F)</name>
    <dbReference type="NCBI Taxonomy" id="386656"/>
    <lineage>
        <taxon>Bacteria</taxon>
        <taxon>Pseudomonadati</taxon>
        <taxon>Pseudomonadota</taxon>
        <taxon>Gammaproteobacteria</taxon>
        <taxon>Enterobacterales</taxon>
        <taxon>Yersiniaceae</taxon>
        <taxon>Yersinia</taxon>
    </lineage>
</organism>
<keyword id="KW-0012">Acyltransferase</keyword>
<keyword id="KW-0963">Cytoplasm</keyword>
<keyword id="KW-0441">Lipid A biosynthesis</keyword>
<keyword id="KW-0444">Lipid biosynthesis</keyword>
<keyword id="KW-0443">Lipid metabolism</keyword>
<keyword id="KW-0677">Repeat</keyword>
<keyword id="KW-0808">Transferase</keyword>
<name>LPXA_YERPP</name>
<feature type="chain" id="PRO_0000302616" description="Acyl-[acyl-carrier-protein]--UDP-N-acetylglucosamine O-acyltransferase">
    <location>
        <begin position="1"/>
        <end position="262"/>
    </location>
</feature>
<protein>
    <recommendedName>
        <fullName evidence="1">Acyl-[acyl-carrier-protein]--UDP-N-acetylglucosamine O-acyltransferase</fullName>
        <shortName evidence="1">UDP-N-acetylglucosamine acyltransferase</shortName>
        <ecNumber evidence="1">2.3.1.129</ecNumber>
    </recommendedName>
</protein>
<gene>
    <name evidence="1" type="primary">lpxA</name>
    <name type="ordered locus">YPDSF_1656</name>
</gene>
<comment type="function">
    <text evidence="1">Involved in the biosynthesis of lipid A, a phosphorylated glycolipid that anchors the lipopolysaccharide to the outer membrane of the cell.</text>
</comment>
<comment type="catalytic activity">
    <reaction evidence="1">
        <text>a (3R)-hydroxyacyl-[ACP] + UDP-N-acetyl-alpha-D-glucosamine = a UDP-3-O-[(3R)-3-hydroxyacyl]-N-acetyl-alpha-D-glucosamine + holo-[ACP]</text>
        <dbReference type="Rhea" id="RHEA:67812"/>
        <dbReference type="Rhea" id="RHEA-COMP:9685"/>
        <dbReference type="Rhea" id="RHEA-COMP:9945"/>
        <dbReference type="ChEBI" id="CHEBI:57705"/>
        <dbReference type="ChEBI" id="CHEBI:64479"/>
        <dbReference type="ChEBI" id="CHEBI:78827"/>
        <dbReference type="ChEBI" id="CHEBI:173225"/>
        <dbReference type="EC" id="2.3.1.129"/>
    </reaction>
</comment>
<comment type="pathway">
    <text evidence="1">Glycolipid biosynthesis; lipid IV(A) biosynthesis; lipid IV(A) from (3R)-3-hydroxytetradecanoyl-[acyl-carrier-protein] and UDP-N-acetyl-alpha-D-glucosamine: step 1/6.</text>
</comment>
<comment type="subunit">
    <text evidence="1">Homotrimer.</text>
</comment>
<comment type="subcellular location">
    <subcellularLocation>
        <location evidence="1">Cytoplasm</location>
    </subcellularLocation>
</comment>
<comment type="similarity">
    <text evidence="1">Belongs to the transferase hexapeptide repeat family. LpxA subfamily.</text>
</comment>
<proteinExistence type="inferred from homology"/>
<dbReference type="EC" id="2.3.1.129" evidence="1"/>
<dbReference type="EMBL" id="CP000668">
    <property type="protein sequence ID" value="ABP40041.1"/>
    <property type="molecule type" value="Genomic_DNA"/>
</dbReference>
<dbReference type="RefSeq" id="WP_002212143.1">
    <property type="nucleotide sequence ID" value="NZ_CP009715.1"/>
</dbReference>
<dbReference type="SMR" id="A4TL79"/>
<dbReference type="GeneID" id="57977505"/>
<dbReference type="KEGG" id="ypp:YPDSF_1656"/>
<dbReference type="PATRIC" id="fig|386656.14.peg.2106"/>
<dbReference type="UniPathway" id="UPA00359">
    <property type="reaction ID" value="UER00477"/>
</dbReference>
<dbReference type="GO" id="GO:0005737">
    <property type="term" value="C:cytoplasm"/>
    <property type="evidence" value="ECO:0007669"/>
    <property type="project" value="UniProtKB-SubCell"/>
</dbReference>
<dbReference type="GO" id="GO:0016020">
    <property type="term" value="C:membrane"/>
    <property type="evidence" value="ECO:0007669"/>
    <property type="project" value="GOC"/>
</dbReference>
<dbReference type="GO" id="GO:0008780">
    <property type="term" value="F:acyl-[acyl-carrier-protein]-UDP-N-acetylglucosamine O-acyltransferase activity"/>
    <property type="evidence" value="ECO:0007669"/>
    <property type="project" value="UniProtKB-UniRule"/>
</dbReference>
<dbReference type="GO" id="GO:0009245">
    <property type="term" value="P:lipid A biosynthetic process"/>
    <property type="evidence" value="ECO:0007669"/>
    <property type="project" value="UniProtKB-UniRule"/>
</dbReference>
<dbReference type="CDD" id="cd03351">
    <property type="entry name" value="LbH_UDP-GlcNAc_AT"/>
    <property type="match status" value="1"/>
</dbReference>
<dbReference type="FunFam" id="1.20.1180.10:FF:000001">
    <property type="entry name" value="Acyl-[acyl-carrier-protein]--UDP-N-acetylglucosamine O-acyltransferase"/>
    <property type="match status" value="1"/>
</dbReference>
<dbReference type="FunFam" id="2.160.10.10:FF:000003">
    <property type="entry name" value="Acyl-[acyl-carrier-protein]--UDP-N-acetylglucosamine O-acyltransferase"/>
    <property type="match status" value="1"/>
</dbReference>
<dbReference type="Gene3D" id="2.160.10.10">
    <property type="entry name" value="Hexapeptide repeat proteins"/>
    <property type="match status" value="1"/>
</dbReference>
<dbReference type="Gene3D" id="1.20.1180.10">
    <property type="entry name" value="Udp N-acetylglucosamine O-acyltransferase, C-terminal domain"/>
    <property type="match status" value="1"/>
</dbReference>
<dbReference type="HAMAP" id="MF_00387">
    <property type="entry name" value="LpxA"/>
    <property type="match status" value="1"/>
</dbReference>
<dbReference type="InterPro" id="IPR029098">
    <property type="entry name" value="Acetyltransf_C"/>
</dbReference>
<dbReference type="InterPro" id="IPR037157">
    <property type="entry name" value="Acetyltransf_C_sf"/>
</dbReference>
<dbReference type="InterPro" id="IPR001451">
    <property type="entry name" value="Hexapep"/>
</dbReference>
<dbReference type="InterPro" id="IPR018357">
    <property type="entry name" value="Hexapep_transf_CS"/>
</dbReference>
<dbReference type="InterPro" id="IPR010137">
    <property type="entry name" value="Lipid_A_LpxA"/>
</dbReference>
<dbReference type="InterPro" id="IPR011004">
    <property type="entry name" value="Trimer_LpxA-like_sf"/>
</dbReference>
<dbReference type="NCBIfam" id="TIGR01852">
    <property type="entry name" value="lipid_A_lpxA"/>
    <property type="match status" value="1"/>
</dbReference>
<dbReference type="NCBIfam" id="NF003657">
    <property type="entry name" value="PRK05289.1"/>
    <property type="match status" value="1"/>
</dbReference>
<dbReference type="PANTHER" id="PTHR43480">
    <property type="entry name" value="ACYL-[ACYL-CARRIER-PROTEIN]--UDP-N-ACETYLGLUCOSAMINE O-ACYLTRANSFERASE"/>
    <property type="match status" value="1"/>
</dbReference>
<dbReference type="PANTHER" id="PTHR43480:SF1">
    <property type="entry name" value="ACYL-[ACYL-CARRIER-PROTEIN]--UDP-N-ACETYLGLUCOSAMINE O-ACYLTRANSFERASE, MITOCHONDRIAL-RELATED"/>
    <property type="match status" value="1"/>
</dbReference>
<dbReference type="Pfam" id="PF13720">
    <property type="entry name" value="Acetyltransf_11"/>
    <property type="match status" value="1"/>
</dbReference>
<dbReference type="Pfam" id="PF00132">
    <property type="entry name" value="Hexapep"/>
    <property type="match status" value="2"/>
</dbReference>
<dbReference type="PIRSF" id="PIRSF000456">
    <property type="entry name" value="UDP-GlcNAc_acltr"/>
    <property type="match status" value="1"/>
</dbReference>
<dbReference type="SUPFAM" id="SSF51161">
    <property type="entry name" value="Trimeric LpxA-like enzymes"/>
    <property type="match status" value="1"/>
</dbReference>
<dbReference type="PROSITE" id="PS00101">
    <property type="entry name" value="HEXAPEP_TRANSFERASES"/>
    <property type="match status" value="2"/>
</dbReference>